<reference key="1">
    <citation type="journal article" date="2019" name="PeerJ">
        <title>Genes of the pig, Sus scrofa, reconstructed with EvidentialGene.</title>
        <authorList>
            <person name="Gilbert D.G."/>
        </authorList>
    </citation>
    <scope>NUCLEOTIDE SEQUENCE [LARGE SCALE MRNA]</scope>
</reference>
<reference key="2">
    <citation type="submission" date="2009-11" db="EMBL/GenBank/DDBJ databases">
        <authorList>
            <consortium name="Porcine genome sequencing project"/>
        </authorList>
    </citation>
    <scope>NUCLEOTIDE SEQUENCE [LARGE SCALE GENOMIC DNA]</scope>
    <source>
        <strain>Duroc</strain>
    </source>
</reference>
<reference key="3">
    <citation type="thesis" date="1992" institute="Friedrich Miescher Institut / Basel" country="Switzerland">
        <authorList>
            <person name="Mayer-Jaekel R.E."/>
        </authorList>
    </citation>
    <scope>NUCLEOTIDE SEQUENCE [MRNA] OF 22-447</scope>
</reference>
<proteinExistence type="evidence at transcript level"/>
<name>2ABA_PIG</name>
<comment type="function">
    <text evidence="1 2">Substrate-recognition subunit of protein phosphatase 2A (PP2A) that plays a key role in cell cycle by controlling mitosis entry and exit. Involved in chromosome clustering during late mitosis by mediating dephosphorylation of MKI67 (By similarity). Essential for serine/threonine-protein phosphatase 2A-mediated dephosphorylation of WEE1, preventing its ubiquitin-mediated proteolysis, increasing WEE1 protein levels, and promoting the G2/M checkpoint (By similarity).</text>
</comment>
<comment type="subunit">
    <text evidence="1 2">PP2A consists of a common heterodimeric core enzyme, composed of a 36 kDa catalytic subunit (subunit C) and a 65 kDa constant regulatory subunit (PR65 or subunit A), that associates with a variety of regulatory subunits (By similarity). Proteins that associate with the core dimer include three families of regulatory subunits B (the R2/B/PR55/B55, R3/B''/PR72/PR130/PR59 and R5/B'/B56 families), the 48 kDa variable regulatory subunit, viral proteins, and cell signaling molecules (By similarity). Interacts with the PP2A C catalytic subunit (By similarity). Interacts with the PP2A A subunit PPP2R1A (By similarity). Interacts with TP53 (By similarity). Interacts with IER5 (By similarity). Interacts with MFHAS1; the interaction is direct (By similarity). Interacts with PABIR1/FAM122A (via its N-terminus); the interaction is direct and inhibits PP2A activity (By similarity). Interacts with ARPP19; the interaction is direct and inhibits PP2A activity (By similarity). Interacts with CRTC3 (By similarity).</text>
</comment>
<comment type="domain">
    <text evidence="1">Has an extended WD 2 that is important for the interaction with PPP2R1A.</text>
</comment>
<comment type="similarity">
    <text evidence="3">Belongs to the phosphatase 2A regulatory subunit B family.</text>
</comment>
<keyword id="KW-1185">Reference proteome</keyword>
<keyword id="KW-0677">Repeat</keyword>
<keyword id="KW-0853">WD repeat</keyword>
<organism>
    <name type="scientific">Sus scrofa</name>
    <name type="common">Pig</name>
    <dbReference type="NCBI Taxonomy" id="9823"/>
    <lineage>
        <taxon>Eukaryota</taxon>
        <taxon>Metazoa</taxon>
        <taxon>Chordata</taxon>
        <taxon>Craniata</taxon>
        <taxon>Vertebrata</taxon>
        <taxon>Euteleostomi</taxon>
        <taxon>Mammalia</taxon>
        <taxon>Eutheria</taxon>
        <taxon>Laurasiatheria</taxon>
        <taxon>Artiodactyla</taxon>
        <taxon>Suina</taxon>
        <taxon>Suidae</taxon>
        <taxon>Sus</taxon>
    </lineage>
</organism>
<sequence>MAGAGGGNDIQWCFSQVKGAVDDDVAEADIISTVEFNHSGELLATGDKGGRVVIFQQEQENKIQSHSRGEYNVYSTFQSHEPEFDYLKSLEIEEKINKIRWLPQKNAAQFLLSTNDKTIKLWKISERDKRPEGYNLKEEDGRYRDPTTVTTLRVPVFRPMDLMVEASPRRIFANAHTYHINSISINSDYETYLSADDLRINLWHLEITDRSFNIVDIKPANMEELTEVITAAEFHPNSCNTFVYSSSKGTIRLCDMRASALCDRHSKLFEEPEDPSNRSFFSEIISSISDVKFSHSGRYMMTRDYLSVKIWDLNMENRPVETYQVHEYLRSKLCSLYENDCIFDKFECCWNGSDSVVMTGSYNNFFRMFDRNTKRDITLEASRENNKPRTVLKPRKVCASGKRKKDEISVDSLDFNKKILHTAWHPKENIIAVATTNNLYIFQDKVN</sequence>
<evidence type="ECO:0000250" key="1">
    <source>
        <dbReference type="UniProtKB" id="P63151"/>
    </source>
</evidence>
<evidence type="ECO:0000250" key="2">
    <source>
        <dbReference type="UniProtKB" id="Q6P1F6"/>
    </source>
</evidence>
<evidence type="ECO:0000305" key="3"/>
<feature type="initiator methionine" description="Removed" evidence="1">
    <location>
        <position position="1"/>
    </location>
</feature>
<feature type="chain" id="PRO_0000071418" description="Serine/threonine-protein phosphatase 2A 55 kDa regulatory subunit B alpha isoform">
    <location>
        <begin position="2"/>
        <end position="447"/>
    </location>
</feature>
<feature type="repeat" description="WD 1" evidence="1">
    <location>
        <begin position="11"/>
        <end position="80"/>
    </location>
</feature>
<feature type="repeat" description="WD 2" evidence="1">
    <location>
        <begin position="94"/>
        <end position="174"/>
    </location>
</feature>
<feature type="repeat" description="WD 3" evidence="1">
    <location>
        <begin position="175"/>
        <end position="218"/>
    </location>
</feature>
<feature type="repeat" description="WD 4" evidence="1">
    <location>
        <begin position="227"/>
        <end position="270"/>
    </location>
</feature>
<feature type="repeat" description="WD 5" evidence="1">
    <location>
        <begin position="288"/>
        <end position="325"/>
    </location>
</feature>
<feature type="repeat" description="WD 6" evidence="1">
    <location>
        <begin position="347"/>
        <end position="381"/>
    </location>
</feature>
<feature type="repeat" description="WD 7" evidence="1">
    <location>
        <begin position="414"/>
        <end position="446"/>
    </location>
</feature>
<dbReference type="EMBL" id="DQIR01236520">
    <property type="protein sequence ID" value="HDB91997.1"/>
    <property type="molecule type" value="Transcribed_RNA"/>
</dbReference>
<dbReference type="EMBL" id="Z34932">
    <property type="protein sequence ID" value="CAA84404.1"/>
    <property type="molecule type" value="mRNA"/>
</dbReference>
<dbReference type="RefSeq" id="NP_001157492.1">
    <property type="nucleotide sequence ID" value="NM_001164020.2"/>
</dbReference>
<dbReference type="SMR" id="Q29090"/>
<dbReference type="FunCoup" id="Q29090">
    <property type="interactions" value="480"/>
</dbReference>
<dbReference type="STRING" id="9823.ENSSSCP00000010312"/>
<dbReference type="PaxDb" id="9823-ENSSSCP00000010312"/>
<dbReference type="PeptideAtlas" id="Q29090"/>
<dbReference type="Ensembl" id="ENSSSCT00000036904.3">
    <property type="protein sequence ID" value="ENSSSCP00000057933.3"/>
    <property type="gene ID" value="ENSSSCG00000009657.5"/>
</dbReference>
<dbReference type="Ensembl" id="ENSSSCT00090032029">
    <property type="protein sequence ID" value="ENSSSCP00090019763"/>
    <property type="gene ID" value="ENSSSCG00090018178"/>
</dbReference>
<dbReference type="Ensembl" id="ENSSSCT00105013129">
    <property type="protein sequence ID" value="ENSSSCP00105009641"/>
    <property type="gene ID" value="ENSSSCG00105006466"/>
</dbReference>
<dbReference type="Ensembl" id="ENSSSCT00110072878">
    <property type="protein sequence ID" value="ENSSSCP00110051560"/>
    <property type="gene ID" value="ENSSSCG00110038179"/>
</dbReference>
<dbReference type="Ensembl" id="ENSSSCT00115004036">
    <property type="protein sequence ID" value="ENSSSCP00115003716"/>
    <property type="gene ID" value="ENSSSCG00115002416"/>
</dbReference>
<dbReference type="Ensembl" id="ENSSSCT00130008017">
    <property type="protein sequence ID" value="ENSSSCP00130005411"/>
    <property type="gene ID" value="ENSSSCG00130004299"/>
</dbReference>
<dbReference type="GeneID" id="397090"/>
<dbReference type="KEGG" id="ssc:397090"/>
<dbReference type="CTD" id="5520"/>
<dbReference type="VGNC" id="VGNC:91748">
    <property type="gene designation" value="PPP2R2A"/>
</dbReference>
<dbReference type="eggNOG" id="KOG1354">
    <property type="taxonomic scope" value="Eukaryota"/>
</dbReference>
<dbReference type="GeneTree" id="ENSGT00950000182864"/>
<dbReference type="HOGENOM" id="CLU_021713_3_3_1"/>
<dbReference type="InParanoid" id="Q29090"/>
<dbReference type="OMA" id="NQIKWCR"/>
<dbReference type="OrthoDB" id="6274823at2759"/>
<dbReference type="Proteomes" id="UP000008227">
    <property type="component" value="Chromosome 14"/>
</dbReference>
<dbReference type="Proteomes" id="UP000314985">
    <property type="component" value="Unplaced"/>
</dbReference>
<dbReference type="Proteomes" id="UP000694570">
    <property type="component" value="Unplaced"/>
</dbReference>
<dbReference type="Proteomes" id="UP000694571">
    <property type="component" value="Unplaced"/>
</dbReference>
<dbReference type="Proteomes" id="UP000694720">
    <property type="component" value="Unplaced"/>
</dbReference>
<dbReference type="Proteomes" id="UP000694722">
    <property type="component" value="Unplaced"/>
</dbReference>
<dbReference type="Proteomes" id="UP000694723">
    <property type="component" value="Unplaced"/>
</dbReference>
<dbReference type="Proteomes" id="UP000694724">
    <property type="component" value="Unplaced"/>
</dbReference>
<dbReference type="Proteomes" id="UP000694725">
    <property type="component" value="Unplaced"/>
</dbReference>
<dbReference type="Proteomes" id="UP000694726">
    <property type="component" value="Unplaced"/>
</dbReference>
<dbReference type="Proteomes" id="UP000694727">
    <property type="component" value="Unplaced"/>
</dbReference>
<dbReference type="Proteomes" id="UP000694728">
    <property type="component" value="Unplaced"/>
</dbReference>
<dbReference type="Bgee" id="ENSSSCG00000009657">
    <property type="expression patterns" value="Expressed in ovary and 45 other cell types or tissues"/>
</dbReference>
<dbReference type="GO" id="GO:0005829">
    <property type="term" value="C:cytosol"/>
    <property type="evidence" value="ECO:0000318"/>
    <property type="project" value="GO_Central"/>
</dbReference>
<dbReference type="GO" id="GO:0000159">
    <property type="term" value="C:protein phosphatase type 2A complex"/>
    <property type="evidence" value="ECO:0000250"/>
    <property type="project" value="UniProtKB"/>
</dbReference>
<dbReference type="GO" id="GO:0140767">
    <property type="term" value="F:enzyme-substrate adaptor activity"/>
    <property type="evidence" value="ECO:0000250"/>
    <property type="project" value="UniProtKB"/>
</dbReference>
<dbReference type="GO" id="GO:0019888">
    <property type="term" value="F:protein phosphatase regulator activity"/>
    <property type="evidence" value="ECO:0000250"/>
    <property type="project" value="UniProtKB"/>
</dbReference>
<dbReference type="GO" id="GO:0006470">
    <property type="term" value="P:protein dephosphorylation"/>
    <property type="evidence" value="ECO:0000250"/>
    <property type="project" value="UniProtKB"/>
</dbReference>
<dbReference type="GO" id="GO:0051983">
    <property type="term" value="P:regulation of chromosome segregation"/>
    <property type="evidence" value="ECO:0000250"/>
    <property type="project" value="UniProtKB"/>
</dbReference>
<dbReference type="FunFam" id="2.130.10.10:FF:000002">
    <property type="entry name" value="Serine/threonine-protein phosphatase 2A 55 kDa regulatory subunit B"/>
    <property type="match status" value="1"/>
</dbReference>
<dbReference type="Gene3D" id="2.130.10.10">
    <property type="entry name" value="YVTN repeat-like/Quinoprotein amine dehydrogenase"/>
    <property type="match status" value="1"/>
</dbReference>
<dbReference type="InterPro" id="IPR000009">
    <property type="entry name" value="PP2A_PR55"/>
</dbReference>
<dbReference type="InterPro" id="IPR018067">
    <property type="entry name" value="PP2A_PR55_CS"/>
</dbReference>
<dbReference type="InterPro" id="IPR015943">
    <property type="entry name" value="WD40/YVTN_repeat-like_dom_sf"/>
</dbReference>
<dbReference type="InterPro" id="IPR036322">
    <property type="entry name" value="WD40_repeat_dom_sf"/>
</dbReference>
<dbReference type="InterPro" id="IPR001680">
    <property type="entry name" value="WD40_rpt"/>
</dbReference>
<dbReference type="PANTHER" id="PTHR11871">
    <property type="entry name" value="PROTEIN PHOSPHATASE PP2A REGULATORY SUBUNIT B"/>
    <property type="match status" value="1"/>
</dbReference>
<dbReference type="PIRSF" id="PIRSF037309">
    <property type="entry name" value="PP2A_PR55"/>
    <property type="match status" value="1"/>
</dbReference>
<dbReference type="PRINTS" id="PR00600">
    <property type="entry name" value="PP2APR55"/>
</dbReference>
<dbReference type="SMART" id="SM00320">
    <property type="entry name" value="WD40"/>
    <property type="match status" value="7"/>
</dbReference>
<dbReference type="SUPFAM" id="SSF50978">
    <property type="entry name" value="WD40 repeat-like"/>
    <property type="match status" value="1"/>
</dbReference>
<dbReference type="PROSITE" id="PS01024">
    <property type="entry name" value="PR55_1"/>
    <property type="match status" value="1"/>
</dbReference>
<dbReference type="PROSITE" id="PS01025">
    <property type="entry name" value="PR55_2"/>
    <property type="match status" value="1"/>
</dbReference>
<gene>
    <name type="primary">PPP2R2A</name>
</gene>
<accession>Q29090</accession>
<accession>A0A287BPB7</accession>
<accession>A0A480W740</accession>
<protein>
    <recommendedName>
        <fullName>Serine/threonine-protein phosphatase 2A 55 kDa regulatory subunit B alpha isoform</fullName>
    </recommendedName>
    <alternativeName>
        <fullName>PP2A subunit B isoform B55-alpha</fullName>
        <shortName evidence="1">B55</shortName>
    </alternativeName>
    <alternativeName>
        <fullName>PP2A subunit B isoform PR55-alpha</fullName>
    </alternativeName>
    <alternativeName>
        <fullName>PP2A subunit B isoform R2-alpha</fullName>
    </alternativeName>
    <alternativeName>
        <fullName>PP2A subunit B isoform alpha</fullName>
    </alternativeName>
</protein>